<dbReference type="EMBL" id="AF041468">
    <property type="protein sequence ID" value="AAC35692.1"/>
    <property type="molecule type" value="Genomic_DNA"/>
</dbReference>
<dbReference type="RefSeq" id="NP_050758.1">
    <property type="nucleotide sequence ID" value="NC_000926.1"/>
</dbReference>
<dbReference type="GeneID" id="857063"/>
<dbReference type="HOGENOM" id="CLU_081117_2_0_1"/>
<dbReference type="OMA" id="YDGQTWE"/>
<dbReference type="GO" id="GO:0009507">
    <property type="term" value="C:chloroplast"/>
    <property type="evidence" value="ECO:0007669"/>
    <property type="project" value="UniProtKB-SubCell"/>
</dbReference>
<dbReference type="InterPro" id="IPR009631">
    <property type="entry name" value="CGLD27-like"/>
</dbReference>
<dbReference type="PANTHER" id="PTHR34214">
    <property type="match status" value="1"/>
</dbReference>
<dbReference type="PANTHER" id="PTHR34214:SF3">
    <property type="entry name" value="PROTEIN CONSERVED IN THE GREEN LINEAGE AND DIATOMS 27, CHLOROPLASTIC"/>
    <property type="match status" value="1"/>
</dbReference>
<dbReference type="Pfam" id="PF06799">
    <property type="entry name" value="CGLD27-like"/>
    <property type="match status" value="1"/>
</dbReference>
<sequence length="155" mass="18482">MNCPVPENQLPINEYNKLTSAWDFSWACKIGKLYYKFLLKMQLCLFLFFCICLNFLDSKYETGLYSLILSTLFICLICLRTYLGFRYIYVRLLKSALPYEESSWYDGQVWVKNINYLIKDRLVADYTVLPILSRLKISFTINFSFLICLLLRFIF</sequence>
<reference key="1">
    <citation type="journal article" date="1999" name="J. Mol. Evol.">
        <title>The plastid genome of the cryptophyte alga, Guillardia theta: complete sequence and conserved synteny groups confirm its common ancestry with red algae.</title>
        <authorList>
            <person name="Douglas S.E."/>
            <person name="Penny S.L."/>
        </authorList>
    </citation>
    <scope>NUCLEOTIDE SEQUENCE [LARGE SCALE GENOMIC DNA]</scope>
</reference>
<geneLocation type="chloroplast"/>
<gene>
    <name type="primary">ycf36</name>
</gene>
<evidence type="ECO:0000305" key="1"/>
<proteinExistence type="inferred from homology"/>
<feature type="chain" id="PRO_0000217353" description="Uncharacterized protein ycf36">
    <location>
        <begin position="1"/>
        <end position="155"/>
    </location>
</feature>
<keyword id="KW-0150">Chloroplast</keyword>
<keyword id="KW-0934">Plastid</keyword>
<comment type="subcellular location">
    <subcellularLocation>
        <location>Plastid</location>
        <location>Chloroplast</location>
    </subcellularLocation>
</comment>
<comment type="similarity">
    <text evidence="1">Belongs to the ycf36 family.</text>
</comment>
<organism>
    <name type="scientific">Guillardia theta</name>
    <name type="common">Cryptophyte</name>
    <name type="synonym">Cryptomonas phi</name>
    <dbReference type="NCBI Taxonomy" id="55529"/>
    <lineage>
        <taxon>Eukaryota</taxon>
        <taxon>Cryptophyceae</taxon>
        <taxon>Pyrenomonadales</taxon>
        <taxon>Geminigeraceae</taxon>
        <taxon>Guillardia</taxon>
    </lineage>
</organism>
<accession>O78501</accession>
<name>YCF36_GUITH</name>
<protein>
    <recommendedName>
        <fullName>Uncharacterized protein ycf36</fullName>
    </recommendedName>
</protein>